<protein>
    <recommendedName>
        <fullName>AP-2 complex subunit mu</fullName>
    </recommendedName>
    <alternativeName>
        <fullName>AP-2 mu chain</fullName>
    </alternativeName>
    <alternativeName>
        <fullName>Adaptor protein complex AP-2 subunit mu</fullName>
    </alternativeName>
    <alternativeName>
        <fullName>Adaptor-related protein complex 2 subunit mu</fullName>
    </alternativeName>
    <alternativeName>
        <fullName>Clathrin assembly protein complex 2 mu medium chain</fullName>
    </alternativeName>
    <alternativeName>
        <fullName>Clathrin coat assembly protein AP50</fullName>
    </alternativeName>
    <alternativeName>
        <fullName>Clathrin coat-associated protein AP50</fullName>
    </alternativeName>
    <alternativeName>
        <fullName>HA2 50 kDa subunit</fullName>
    </alternativeName>
    <alternativeName>
        <fullName>Mu2-adaptin</fullName>
    </alternativeName>
    <alternativeName>
        <fullName>Plasma membrane adaptor AP-2 50 kDa protein</fullName>
    </alternativeName>
</protein>
<feature type="chain" id="PRO_0000273970" description="AP-2 complex subunit mu">
    <location>
        <begin position="1"/>
        <end position="435"/>
    </location>
</feature>
<feature type="domain" description="MHD" evidence="4">
    <location>
        <begin position="170"/>
        <end position="434"/>
    </location>
</feature>
<feature type="binding site" evidence="2">
    <location>
        <position position="341"/>
    </location>
    <ligand>
        <name>a 1,2-diacyl-sn-glycero-3-phospho-(1D-myo-inositol-3,4,5-trisphosphate)</name>
        <dbReference type="ChEBI" id="CHEBI:57836"/>
    </ligand>
</feature>
<feature type="binding site" evidence="2">
    <location>
        <position position="345"/>
    </location>
    <ligand>
        <name>a 1,2-diacyl-sn-glycero-3-phospho-(1D-myo-inositol-3,4,5-trisphosphate)</name>
        <dbReference type="ChEBI" id="CHEBI:57836"/>
    </ligand>
</feature>
<feature type="binding site" evidence="2">
    <location>
        <position position="354"/>
    </location>
    <ligand>
        <name>a 1,2-diacyl-sn-glycero-3-phospho-(1D-myo-inositol-3,4,5-trisphosphate)</name>
        <dbReference type="ChEBI" id="CHEBI:57836"/>
    </ligand>
</feature>
<feature type="modified residue" description="Phosphoserine" evidence="3">
    <location>
        <position position="45"/>
    </location>
</feature>
<feature type="modified residue" description="Phosphothreonine" evidence="3">
    <location>
        <position position="156"/>
    </location>
</feature>
<feature type="strand" evidence="6">
    <location>
        <begin position="5"/>
        <end position="8"/>
    </location>
</feature>
<feature type="strand" evidence="6">
    <location>
        <begin position="14"/>
        <end position="18"/>
    </location>
</feature>
<feature type="helix" evidence="6">
    <location>
        <begin position="28"/>
        <end position="35"/>
    </location>
</feature>
<feature type="turn" evidence="6">
    <location>
        <begin position="36"/>
        <end position="38"/>
    </location>
</feature>
<feature type="strand" evidence="6">
    <location>
        <begin position="48"/>
        <end position="50"/>
    </location>
</feature>
<feature type="strand" evidence="6">
    <location>
        <begin position="53"/>
        <end position="60"/>
    </location>
</feature>
<feature type="strand" evidence="6">
    <location>
        <begin position="63"/>
        <end position="71"/>
    </location>
</feature>
<feature type="helix" evidence="6">
    <location>
        <begin position="75"/>
        <end position="93"/>
    </location>
</feature>
<feature type="helix" evidence="6">
    <location>
        <begin position="98"/>
        <end position="103"/>
    </location>
</feature>
<feature type="helix" evidence="6">
    <location>
        <begin position="105"/>
        <end position="115"/>
    </location>
</feature>
<feature type="turn" evidence="6">
    <location>
        <begin position="126"/>
        <end position="129"/>
    </location>
</feature>
<feature type="strand" evidence="6">
    <location>
        <begin position="172"/>
        <end position="185"/>
    </location>
</feature>
<feature type="strand" evidence="6">
    <location>
        <begin position="191"/>
        <end position="205"/>
    </location>
</feature>
<feature type="strand" evidence="6">
    <location>
        <begin position="211"/>
        <end position="216"/>
    </location>
</feature>
<feature type="strand" evidence="6">
    <location>
        <begin position="245"/>
        <end position="248"/>
    </location>
</feature>
<feature type="strand" evidence="6">
    <location>
        <begin position="256"/>
        <end position="259"/>
    </location>
</feature>
<feature type="strand" evidence="6">
    <location>
        <begin position="261"/>
        <end position="265"/>
    </location>
</feature>
<feature type="strand" evidence="6">
    <location>
        <begin position="269"/>
        <end position="279"/>
    </location>
</feature>
<feature type="strand" evidence="6">
    <location>
        <begin position="286"/>
        <end position="290"/>
    </location>
</feature>
<feature type="strand" evidence="6">
    <location>
        <begin position="293"/>
        <end position="296"/>
    </location>
</feature>
<feature type="turn" evidence="6">
    <location>
        <begin position="297"/>
        <end position="299"/>
    </location>
</feature>
<feature type="strand" evidence="6">
    <location>
        <begin position="300"/>
        <end position="309"/>
    </location>
</feature>
<feature type="strand" evidence="6">
    <location>
        <begin position="316"/>
        <end position="325"/>
    </location>
</feature>
<feature type="strand" evidence="6">
    <location>
        <begin position="331"/>
        <end position="345"/>
    </location>
</feature>
<feature type="turn" evidence="6">
    <location>
        <begin position="346"/>
        <end position="349"/>
    </location>
</feature>
<feature type="strand" evidence="6">
    <location>
        <begin position="350"/>
        <end position="359"/>
    </location>
</feature>
<feature type="strand" evidence="6">
    <location>
        <begin position="363"/>
        <end position="371"/>
    </location>
</feature>
<feature type="strand" evidence="6">
    <location>
        <begin position="377"/>
        <end position="379"/>
    </location>
</feature>
<feature type="strand" evidence="6">
    <location>
        <begin position="387"/>
        <end position="394"/>
    </location>
</feature>
<feature type="strand" evidence="6">
    <location>
        <begin position="401"/>
        <end position="407"/>
    </location>
</feature>
<feature type="strand" evidence="6">
    <location>
        <begin position="409"/>
        <end position="412"/>
    </location>
</feature>
<feature type="turn" evidence="6">
    <location>
        <begin position="415"/>
        <end position="417"/>
    </location>
</feature>
<feature type="strand" evidence="6">
    <location>
        <begin position="418"/>
        <end position="427"/>
    </location>
</feature>
<reference key="1">
    <citation type="submission" date="2005-08" db="EMBL/GenBank/DDBJ databases">
        <authorList>
            <consortium name="NIH - Mammalian Gene Collection (MGC) project"/>
        </authorList>
    </citation>
    <scope>NUCLEOTIDE SEQUENCE [LARGE SCALE MRNA]</scope>
    <source>
        <strain>Hereford</strain>
        <tissue>Hypothalamus</tissue>
    </source>
</reference>
<gene>
    <name type="primary">AP2M1</name>
</gene>
<comment type="function">
    <text evidence="2 3">Component of the adaptor protein complex 2 (AP-2). Adaptor protein complexes function in protein transport via transport vesicles in different membrane traffic pathways. Adaptor protein complexes are vesicle coat components and appear to be involved in cargo selection and vesicle formation. AP-2 is involved in clathrin-dependent endocytosis in which cargo proteins are incorporated into vesicles surrounded by clathrin (clathrin-coated vesicles, CCVs) which are destined for fusion with the early endosome. The clathrin lattice serves as a mechanical scaffold but is itself unable to bind directly to membrane components. Clathrin-associated adaptor protein (AP) complexes which can bind directly to both the clathrin lattice and to the lipid and protein components of membranes are considered to be the major clathrin adaptors contributing the CCV formation. AP-2 also serves as a cargo receptor to selectively sort the membrane proteins involved in receptor-mediated endocytosis. AP-2 seems to play a role in the recycling of synaptic vesicle membranes from the presynaptic surface (By similarity). AP-2 recognizes Y-X-X-[FILMV] (Y-X-X-Phi) and [ED]-X-X-X-L-[LI] endocytosis signal motifs within the cytosolic tails of transmembrane cargo molecules (By similarity). AP-2 may also play a role in maintaining normal post-endocytic trafficking through the ARF6-regulated, non-clathrin pathway. During long-term potentiation in hippocampal neurons, AP-2 is responsible for the endocytosis of ADAM10 (By similarity). The AP-2 mu subunit binds to transmembrane cargo proteins; it recognizes the Y-X-X-Phi motifs (By similarity). The surface region interacting with to the Y-X-X-Phi motif is inaccessible in cytosolic AP-2, but becomes accessible through a conformational change following phosphorylation of AP-2 mu subunit at Thr-156 in membrane-associated AP-2. The membrane-specific phosphorylation event appears to involve assembled clathrin which activates the AP-2 mu kinase AAK1 (By similarity). Plays a role in endocytosis of frizzled family members upon Wnt signaling (By similarity).</text>
</comment>
<comment type="subunit">
    <text evidence="1 2 3">Adaptor protein complex 2 (AP-2) is a heterotetramer composed of two large adaptins (alpha-type subunit AP2A1 or AP2A2 and beta-type subunit AP2B1), a medium adaptin (mu-type subunit AP2M1) and a small adaptin (sigma-type subunit AP2S1) (By similarity). Interacts with ATP6V1H and MEGF10 (By similarity). Interacts with EGFR and TTGN1 (By similarity). Interacts with F2R (By similarity). Interacts with PIP5K1C; tyrosine phosphorylation of PIP5K1C weakens the interaction (By similarity). Interacts with KIAA0319; required for clathrin-mediated endocytosis of KIAA0319 (By similarity). Interacts with DVL2 (via DEP domain) (By similarity). Interacts with KCNQ1; mediates estrogen-induced internalization via clathrin-coated vesicles (By similarity). Interacts with P2RX4 (via internalization motif) (By similarity). Together with AP2A1 or AP2A2 and AP2B1, it interacts with ADAM10; this interaction facilitates ADAM10 endocytosis from the plasma membrane during long-term potentiation in hippocampal neurons (By similarity). Probably interacts with ACE2 (via endocytic sorting signal motif); the interaction is inhibited by ACE2 phosphorylation (By similarity). Interacts with RALBP1; the interaction is direct (By similarity). Interacts with TMEM106B (via N-terminus) (By similarity).</text>
</comment>
<comment type="subcellular location">
    <subcellularLocation>
        <location evidence="3">Cell membrane</location>
    </subcellularLocation>
    <subcellularLocation>
        <location evidence="3">Membrane</location>
        <location evidence="3">Coated pit</location>
        <topology evidence="3">Peripheral membrane protein</topology>
        <orientation evidence="3">Cytoplasmic side</orientation>
    </subcellularLocation>
    <text evidence="1">AP-2 appears to be excluded from internalizing CCVs and to disengage from sites of endocytosis seconds before internalization of the nascent CCV.</text>
</comment>
<comment type="PTM">
    <text evidence="3">Phosphorylation at Thr-156 increases the affinity of the AP-2 complex for cargo membrane proteins during the initial stages of endocytosis.</text>
</comment>
<comment type="similarity">
    <text evidence="5">Belongs to the adaptor complexes medium subunit family.</text>
</comment>
<sequence length="435" mass="49655">MIGGLFIYNHKGEVLISRVYRDDIGRNAVDAFRVNVIHARQQVRSPVTNIARTSFFHVKRSNIWLAAVTKQNVNAAMVFEFLYKMCDVMAAYFGKISEENIKNNFVLIYELLDEILDFGYPQNSETGALKTFITQQGIKSQHQTKEEQSQITSQVTGQIGWRREGIKYRRNELFLDVLESVNLLMSPQGQVLSAHVSGRVVMKSYLSGMPECKFGMNDKIVIEKQGKGTADETSKSGKQSIAIDDCTFHQCVRLSKFDSERSISFIPPDGEFELMRYRTTKDIILPFRVIPLVREVGRTKLEVKVVIKSNFKPSLLAQKIEVRIPTPLNTSGVQVICMKGKAKYKASENAIVWKIKRMAGMKESQISAEIELLPTNDKKKWARPPISMNFEVPFAPSGLKVRYLKVFEPKLNYSDHDVIKWVRYIGRSGIYETRC</sequence>
<name>AP2M1_BOVIN</name>
<organism>
    <name type="scientific">Bos taurus</name>
    <name type="common">Bovine</name>
    <dbReference type="NCBI Taxonomy" id="9913"/>
    <lineage>
        <taxon>Eukaryota</taxon>
        <taxon>Metazoa</taxon>
        <taxon>Chordata</taxon>
        <taxon>Craniata</taxon>
        <taxon>Vertebrata</taxon>
        <taxon>Euteleostomi</taxon>
        <taxon>Mammalia</taxon>
        <taxon>Eutheria</taxon>
        <taxon>Laurasiatheria</taxon>
        <taxon>Artiodactyla</taxon>
        <taxon>Ruminantia</taxon>
        <taxon>Pecora</taxon>
        <taxon>Bovidae</taxon>
        <taxon>Bovinae</taxon>
        <taxon>Bos</taxon>
    </lineage>
</organism>
<evidence type="ECO:0000250" key="1">
    <source>
        <dbReference type="UniProtKB" id="P84091"/>
    </source>
</evidence>
<evidence type="ECO:0000250" key="2">
    <source>
        <dbReference type="UniProtKB" id="P84092"/>
    </source>
</evidence>
<evidence type="ECO:0000250" key="3">
    <source>
        <dbReference type="UniProtKB" id="Q96CW1"/>
    </source>
</evidence>
<evidence type="ECO:0000255" key="4">
    <source>
        <dbReference type="PROSITE-ProRule" id="PRU00404"/>
    </source>
</evidence>
<evidence type="ECO:0000305" key="5"/>
<evidence type="ECO:0007829" key="6">
    <source>
        <dbReference type="PDB" id="6QH7"/>
    </source>
</evidence>
<keyword id="KW-0002">3D-structure</keyword>
<keyword id="KW-1003">Cell membrane</keyword>
<keyword id="KW-0168">Coated pit</keyword>
<keyword id="KW-0254">Endocytosis</keyword>
<keyword id="KW-0446">Lipid-binding</keyword>
<keyword id="KW-0472">Membrane</keyword>
<keyword id="KW-0597">Phosphoprotein</keyword>
<keyword id="KW-0653">Protein transport</keyword>
<keyword id="KW-1185">Reference proteome</keyword>
<keyword id="KW-0813">Transport</keyword>
<proteinExistence type="evidence at protein level"/>
<accession>Q3ZC13</accession>
<dbReference type="EMBL" id="BC102983">
    <property type="protein sequence ID" value="AAI02984.1"/>
    <property type="molecule type" value="mRNA"/>
</dbReference>
<dbReference type="RefSeq" id="NP_001029695.1">
    <property type="nucleotide sequence ID" value="NM_001034523.2"/>
</dbReference>
<dbReference type="PDB" id="6QH6">
    <property type="method" value="X-ray"/>
    <property type="resolution" value="5.00 A"/>
    <property type="chains" value="M=1-435"/>
</dbReference>
<dbReference type="PDB" id="6QH7">
    <property type="method" value="X-ray"/>
    <property type="resolution" value="3.40 A"/>
    <property type="chains" value="M/N=1-435"/>
</dbReference>
<dbReference type="PDBsum" id="6QH6"/>
<dbReference type="PDBsum" id="6QH7"/>
<dbReference type="SMR" id="Q3ZC13"/>
<dbReference type="FunCoup" id="Q3ZC13">
    <property type="interactions" value="3581"/>
</dbReference>
<dbReference type="IntAct" id="Q3ZC13">
    <property type="interactions" value="1"/>
</dbReference>
<dbReference type="STRING" id="9913.ENSBTAP00000068539"/>
<dbReference type="PaxDb" id="9913-ENSBTAP00000016526"/>
<dbReference type="Ensembl" id="ENSBTAT00000071273.2">
    <property type="protein sequence ID" value="ENSBTAP00000068539.1"/>
    <property type="gene ID" value="ENSBTAG00000020106.7"/>
</dbReference>
<dbReference type="GeneID" id="517446"/>
<dbReference type="KEGG" id="bta:517446"/>
<dbReference type="CTD" id="1173"/>
<dbReference type="VEuPathDB" id="HostDB:ENSBTAG00000020106"/>
<dbReference type="VGNC" id="VGNC:25985">
    <property type="gene designation" value="AP2M1"/>
</dbReference>
<dbReference type="eggNOG" id="KOG0938">
    <property type="taxonomic scope" value="Eukaryota"/>
</dbReference>
<dbReference type="GeneTree" id="ENSGT00940000159223"/>
<dbReference type="HOGENOM" id="CLU_026996_5_2_1"/>
<dbReference type="InParanoid" id="Q3ZC13"/>
<dbReference type="OMA" id="VWKIPRI"/>
<dbReference type="OrthoDB" id="10259133at2759"/>
<dbReference type="TreeFam" id="TF300722"/>
<dbReference type="Reactome" id="R-BTA-177504">
    <property type="pathway name" value="Retrograde neurotrophin signalling"/>
</dbReference>
<dbReference type="Reactome" id="R-BTA-190873">
    <property type="pathway name" value="Gap junction degradation"/>
</dbReference>
<dbReference type="Reactome" id="R-BTA-196025">
    <property type="pathway name" value="Formation of annular gap junctions"/>
</dbReference>
<dbReference type="Reactome" id="R-BTA-2132295">
    <property type="pathway name" value="MHC class II antigen presentation"/>
</dbReference>
<dbReference type="Reactome" id="R-BTA-416993">
    <property type="pathway name" value="Trafficking of GluR2-containing AMPA receptors"/>
</dbReference>
<dbReference type="Reactome" id="R-BTA-437239">
    <property type="pathway name" value="Recycling pathway of L1"/>
</dbReference>
<dbReference type="Reactome" id="R-BTA-5099900">
    <property type="pathway name" value="WNT5A-dependent internalization of FZD4"/>
</dbReference>
<dbReference type="Reactome" id="R-BTA-5140745">
    <property type="pathway name" value="WNT5A-dependent internalization of FZD2, FZD5 and ROR2"/>
</dbReference>
<dbReference type="Reactome" id="R-BTA-8856825">
    <property type="pathway name" value="Cargo recognition for clathrin-mediated endocytosis"/>
</dbReference>
<dbReference type="Reactome" id="R-BTA-8856828">
    <property type="pathway name" value="Clathrin-mediated endocytosis"/>
</dbReference>
<dbReference type="Reactome" id="R-BTA-8866427">
    <property type="pathway name" value="VLDLR internalisation and degradation"/>
</dbReference>
<dbReference type="Reactome" id="R-BTA-8964038">
    <property type="pathway name" value="LDL clearance"/>
</dbReference>
<dbReference type="Proteomes" id="UP000009136">
    <property type="component" value="Chromosome 1"/>
</dbReference>
<dbReference type="Bgee" id="ENSBTAG00000020106">
    <property type="expression patterns" value="Expressed in prefrontal cortex and 106 other cell types or tissues"/>
</dbReference>
<dbReference type="GO" id="GO:0030122">
    <property type="term" value="C:AP-2 adaptor complex"/>
    <property type="evidence" value="ECO:0000318"/>
    <property type="project" value="GO_Central"/>
</dbReference>
<dbReference type="GO" id="GO:0031410">
    <property type="term" value="C:cytoplasmic vesicle"/>
    <property type="evidence" value="ECO:0000318"/>
    <property type="project" value="GO_Central"/>
</dbReference>
<dbReference type="GO" id="GO:0035615">
    <property type="term" value="F:clathrin adaptor activity"/>
    <property type="evidence" value="ECO:0000318"/>
    <property type="project" value="GO_Central"/>
</dbReference>
<dbReference type="GO" id="GO:0008289">
    <property type="term" value="F:lipid binding"/>
    <property type="evidence" value="ECO:0007669"/>
    <property type="project" value="UniProtKB-KW"/>
</dbReference>
<dbReference type="GO" id="GO:0072583">
    <property type="term" value="P:clathrin-dependent endocytosis"/>
    <property type="evidence" value="ECO:0000318"/>
    <property type="project" value="GO_Central"/>
</dbReference>
<dbReference type="GO" id="GO:0006886">
    <property type="term" value="P:intracellular protein transport"/>
    <property type="evidence" value="ECO:0007669"/>
    <property type="project" value="InterPro"/>
</dbReference>
<dbReference type="CDD" id="cd09251">
    <property type="entry name" value="AP-2_Mu2_Cterm"/>
    <property type="match status" value="1"/>
</dbReference>
<dbReference type="CDD" id="cd14836">
    <property type="entry name" value="AP2_Mu_N"/>
    <property type="match status" value="1"/>
</dbReference>
<dbReference type="FunFam" id="2.60.40.1170:FF:000008">
    <property type="entry name" value="AP-2 complex subunit mu isoform 2"/>
    <property type="match status" value="1"/>
</dbReference>
<dbReference type="FunFam" id="3.30.450.60:FF:000002">
    <property type="entry name" value="AP-2 complex subunit mu, putative"/>
    <property type="match status" value="1"/>
</dbReference>
<dbReference type="Gene3D" id="3.30.450.60">
    <property type="match status" value="1"/>
</dbReference>
<dbReference type="Gene3D" id="2.60.40.1170">
    <property type="entry name" value="Mu homology domain, subdomain B"/>
    <property type="match status" value="2"/>
</dbReference>
<dbReference type="InterPro" id="IPR050431">
    <property type="entry name" value="Adaptor_comp_med_subunit"/>
</dbReference>
<dbReference type="InterPro" id="IPR036168">
    <property type="entry name" value="AP2_Mu_C_sf"/>
</dbReference>
<dbReference type="InterPro" id="IPR043532">
    <property type="entry name" value="AP2_Mu_N"/>
</dbReference>
<dbReference type="InterPro" id="IPR022775">
    <property type="entry name" value="AP_mu_sigma_su"/>
</dbReference>
<dbReference type="InterPro" id="IPR001392">
    <property type="entry name" value="Clathrin_mu"/>
</dbReference>
<dbReference type="InterPro" id="IPR018240">
    <property type="entry name" value="Clathrin_mu_CS"/>
</dbReference>
<dbReference type="InterPro" id="IPR011012">
    <property type="entry name" value="Longin-like_dom_sf"/>
</dbReference>
<dbReference type="InterPro" id="IPR028565">
    <property type="entry name" value="MHD"/>
</dbReference>
<dbReference type="InterPro" id="IPR043512">
    <property type="entry name" value="Mu2_C"/>
</dbReference>
<dbReference type="PANTHER" id="PTHR10529">
    <property type="entry name" value="AP COMPLEX SUBUNIT MU"/>
    <property type="match status" value="1"/>
</dbReference>
<dbReference type="Pfam" id="PF00928">
    <property type="entry name" value="Adap_comp_sub"/>
    <property type="match status" value="1"/>
</dbReference>
<dbReference type="Pfam" id="PF01217">
    <property type="entry name" value="Clat_adaptor_s"/>
    <property type="match status" value="1"/>
</dbReference>
<dbReference type="PIRSF" id="PIRSF005992">
    <property type="entry name" value="Clathrin_mu"/>
    <property type="match status" value="1"/>
</dbReference>
<dbReference type="PRINTS" id="PR00314">
    <property type="entry name" value="CLATHRINADPT"/>
</dbReference>
<dbReference type="SUPFAM" id="SSF49447">
    <property type="entry name" value="Second domain of Mu2 adaptin subunit (ap50) of ap2 adaptor"/>
    <property type="match status" value="1"/>
</dbReference>
<dbReference type="SUPFAM" id="SSF64356">
    <property type="entry name" value="SNARE-like"/>
    <property type="match status" value="1"/>
</dbReference>
<dbReference type="PROSITE" id="PS00990">
    <property type="entry name" value="CLAT_ADAPTOR_M_1"/>
    <property type="match status" value="1"/>
</dbReference>
<dbReference type="PROSITE" id="PS00991">
    <property type="entry name" value="CLAT_ADAPTOR_M_2"/>
    <property type="match status" value="1"/>
</dbReference>
<dbReference type="PROSITE" id="PS51072">
    <property type="entry name" value="MHD"/>
    <property type="match status" value="1"/>
</dbReference>